<reference key="1">
    <citation type="journal article" date="2010" name="PLoS Genet.">
        <title>Genome sequence of the plant growth promoting endophytic bacterium Enterobacter sp. 638.</title>
        <authorList>
            <person name="Taghavi S."/>
            <person name="van der Lelie D."/>
            <person name="Hoffman A."/>
            <person name="Zhang Y.B."/>
            <person name="Walla M.D."/>
            <person name="Vangronsveld J."/>
            <person name="Newman L."/>
            <person name="Monchy S."/>
        </authorList>
    </citation>
    <scope>NUCLEOTIDE SEQUENCE [LARGE SCALE GENOMIC DNA]</scope>
    <source>
        <strain>638</strain>
    </source>
</reference>
<feature type="chain" id="PRO_1000060841" description="Gamma-glutamyl phosphate reductase">
    <location>
        <begin position="1"/>
        <end position="417"/>
    </location>
</feature>
<proteinExistence type="inferred from homology"/>
<keyword id="KW-0028">Amino-acid biosynthesis</keyword>
<keyword id="KW-0963">Cytoplasm</keyword>
<keyword id="KW-0521">NADP</keyword>
<keyword id="KW-0560">Oxidoreductase</keyword>
<keyword id="KW-0641">Proline biosynthesis</keyword>
<name>PROA_ENT38</name>
<gene>
    <name evidence="1" type="primary">proA</name>
    <name type="ordered locus">Ent638_0769</name>
</gene>
<dbReference type="EC" id="1.2.1.41" evidence="1"/>
<dbReference type="EMBL" id="CP000653">
    <property type="protein sequence ID" value="ABP59455.1"/>
    <property type="molecule type" value="Genomic_DNA"/>
</dbReference>
<dbReference type="RefSeq" id="WP_012016176.1">
    <property type="nucleotide sequence ID" value="NC_009436.1"/>
</dbReference>
<dbReference type="SMR" id="A4W6X5"/>
<dbReference type="STRING" id="399742.Ent638_0769"/>
<dbReference type="KEGG" id="ent:Ent638_0769"/>
<dbReference type="eggNOG" id="COG0014">
    <property type="taxonomic scope" value="Bacteria"/>
</dbReference>
<dbReference type="HOGENOM" id="CLU_030231_0_0_6"/>
<dbReference type="OrthoDB" id="9809970at2"/>
<dbReference type="UniPathway" id="UPA00098">
    <property type="reaction ID" value="UER00360"/>
</dbReference>
<dbReference type="Proteomes" id="UP000000230">
    <property type="component" value="Chromosome"/>
</dbReference>
<dbReference type="GO" id="GO:0005737">
    <property type="term" value="C:cytoplasm"/>
    <property type="evidence" value="ECO:0007669"/>
    <property type="project" value="UniProtKB-SubCell"/>
</dbReference>
<dbReference type="GO" id="GO:0004350">
    <property type="term" value="F:glutamate-5-semialdehyde dehydrogenase activity"/>
    <property type="evidence" value="ECO:0007669"/>
    <property type="project" value="UniProtKB-UniRule"/>
</dbReference>
<dbReference type="GO" id="GO:0050661">
    <property type="term" value="F:NADP binding"/>
    <property type="evidence" value="ECO:0007669"/>
    <property type="project" value="InterPro"/>
</dbReference>
<dbReference type="GO" id="GO:0055129">
    <property type="term" value="P:L-proline biosynthetic process"/>
    <property type="evidence" value="ECO:0007669"/>
    <property type="project" value="UniProtKB-UniRule"/>
</dbReference>
<dbReference type="CDD" id="cd07079">
    <property type="entry name" value="ALDH_F18-19_ProA-GPR"/>
    <property type="match status" value="1"/>
</dbReference>
<dbReference type="FunFam" id="3.40.309.10:FF:000006">
    <property type="entry name" value="Gamma-glutamyl phosphate reductase"/>
    <property type="match status" value="1"/>
</dbReference>
<dbReference type="Gene3D" id="3.40.605.10">
    <property type="entry name" value="Aldehyde Dehydrogenase, Chain A, domain 1"/>
    <property type="match status" value="1"/>
</dbReference>
<dbReference type="Gene3D" id="3.40.309.10">
    <property type="entry name" value="Aldehyde Dehydrogenase, Chain A, domain 2"/>
    <property type="match status" value="1"/>
</dbReference>
<dbReference type="HAMAP" id="MF_00412">
    <property type="entry name" value="ProA"/>
    <property type="match status" value="1"/>
</dbReference>
<dbReference type="InterPro" id="IPR016161">
    <property type="entry name" value="Ald_DH/histidinol_DH"/>
</dbReference>
<dbReference type="InterPro" id="IPR016163">
    <property type="entry name" value="Ald_DH_C"/>
</dbReference>
<dbReference type="InterPro" id="IPR016162">
    <property type="entry name" value="Ald_DH_N"/>
</dbReference>
<dbReference type="InterPro" id="IPR015590">
    <property type="entry name" value="Aldehyde_DH_dom"/>
</dbReference>
<dbReference type="InterPro" id="IPR020593">
    <property type="entry name" value="G-glutamylP_reductase_CS"/>
</dbReference>
<dbReference type="InterPro" id="IPR012134">
    <property type="entry name" value="Glu-5-SA_DH"/>
</dbReference>
<dbReference type="InterPro" id="IPR000965">
    <property type="entry name" value="GPR_dom"/>
</dbReference>
<dbReference type="NCBIfam" id="NF001221">
    <property type="entry name" value="PRK00197.1"/>
    <property type="match status" value="1"/>
</dbReference>
<dbReference type="NCBIfam" id="TIGR00407">
    <property type="entry name" value="proA"/>
    <property type="match status" value="1"/>
</dbReference>
<dbReference type="PANTHER" id="PTHR11063:SF8">
    <property type="entry name" value="DELTA-1-PYRROLINE-5-CARBOXYLATE SYNTHASE"/>
    <property type="match status" value="1"/>
</dbReference>
<dbReference type="PANTHER" id="PTHR11063">
    <property type="entry name" value="GLUTAMATE SEMIALDEHYDE DEHYDROGENASE"/>
    <property type="match status" value="1"/>
</dbReference>
<dbReference type="Pfam" id="PF00171">
    <property type="entry name" value="Aldedh"/>
    <property type="match status" value="1"/>
</dbReference>
<dbReference type="PIRSF" id="PIRSF000151">
    <property type="entry name" value="GPR"/>
    <property type="match status" value="1"/>
</dbReference>
<dbReference type="SUPFAM" id="SSF53720">
    <property type="entry name" value="ALDH-like"/>
    <property type="match status" value="1"/>
</dbReference>
<dbReference type="PROSITE" id="PS01223">
    <property type="entry name" value="PROA"/>
    <property type="match status" value="1"/>
</dbReference>
<comment type="function">
    <text evidence="1">Catalyzes the NADPH-dependent reduction of L-glutamate 5-phosphate into L-glutamate 5-semialdehyde and phosphate. The product spontaneously undergoes cyclization to form 1-pyrroline-5-carboxylate.</text>
</comment>
<comment type="catalytic activity">
    <reaction evidence="1">
        <text>L-glutamate 5-semialdehyde + phosphate + NADP(+) = L-glutamyl 5-phosphate + NADPH + H(+)</text>
        <dbReference type="Rhea" id="RHEA:19541"/>
        <dbReference type="ChEBI" id="CHEBI:15378"/>
        <dbReference type="ChEBI" id="CHEBI:43474"/>
        <dbReference type="ChEBI" id="CHEBI:57783"/>
        <dbReference type="ChEBI" id="CHEBI:58066"/>
        <dbReference type="ChEBI" id="CHEBI:58274"/>
        <dbReference type="ChEBI" id="CHEBI:58349"/>
        <dbReference type="EC" id="1.2.1.41"/>
    </reaction>
</comment>
<comment type="pathway">
    <text evidence="1">Amino-acid biosynthesis; L-proline biosynthesis; L-glutamate 5-semialdehyde from L-glutamate: step 2/2.</text>
</comment>
<comment type="subcellular location">
    <subcellularLocation>
        <location evidence="1">Cytoplasm</location>
    </subcellularLocation>
</comment>
<comment type="similarity">
    <text evidence="1">Belongs to the gamma-glutamyl phosphate reductase family.</text>
</comment>
<sequence>MLEQMGAAAKAASYKLALLSSREKNRVLEKIADYLEGQSEQILLANEQDLAEARANGLSDAMLDRLALNPARLKSIADDVRQVCNLADPVGQVIDGGLLDSGLRLERRRVPLGVVGVIYEARPNVTVDVASLCLKTGNAAILRGGKETWRTNAATVKVIQQALEECGLPAGAVQAIESPDRALVNEMLRMDKYIDMLIPRGGAGLHKLCREQSTIPVITGGIGVCHIVVDDSAEIEPALKIIVNAKTQRPSTCNTVETLLVHQDIADTFLPALSQQMAESGVTLHADPRALALLQDGPAKVEAVKSEQYDDEYLSLDLNVKVVADLDDAIAHIREHGTQHSDAILTRKLSHGNRFINEVDSSAVYVNASTRFTDGGQFGLGAEVAVSTQKLHARGPMGLEALTTYKWIGYGDDTIRA</sequence>
<accession>A4W6X5</accession>
<protein>
    <recommendedName>
        <fullName evidence="1">Gamma-glutamyl phosphate reductase</fullName>
        <shortName evidence="1">GPR</shortName>
        <ecNumber evidence="1">1.2.1.41</ecNumber>
    </recommendedName>
    <alternativeName>
        <fullName evidence="1">Glutamate-5-semialdehyde dehydrogenase</fullName>
    </alternativeName>
    <alternativeName>
        <fullName evidence="1">Glutamyl-gamma-semialdehyde dehydrogenase</fullName>
        <shortName evidence="1">GSA dehydrogenase</shortName>
    </alternativeName>
</protein>
<organism>
    <name type="scientific">Enterobacter sp. (strain 638)</name>
    <dbReference type="NCBI Taxonomy" id="399742"/>
    <lineage>
        <taxon>Bacteria</taxon>
        <taxon>Pseudomonadati</taxon>
        <taxon>Pseudomonadota</taxon>
        <taxon>Gammaproteobacteria</taxon>
        <taxon>Enterobacterales</taxon>
        <taxon>Enterobacteriaceae</taxon>
        <taxon>Enterobacter</taxon>
    </lineage>
</organism>
<evidence type="ECO:0000255" key="1">
    <source>
        <dbReference type="HAMAP-Rule" id="MF_00412"/>
    </source>
</evidence>